<accession>Q96D21</accession>
<accession>O95520</accession>
<accession>Q5THY8</accession>
<proteinExistence type="evidence at protein level"/>
<protein>
    <recommendedName>
        <fullName>GTP-binding protein Rhes</fullName>
    </recommendedName>
    <alternativeName>
        <fullName>Ras homolog enriched in striatum</fullName>
    </alternativeName>
    <alternativeName>
        <fullName>Tumor endothelial marker 2</fullName>
    </alternativeName>
</protein>
<keyword id="KW-1003">Cell membrane</keyword>
<keyword id="KW-0342">GTP-binding</keyword>
<keyword id="KW-0449">Lipoprotein</keyword>
<keyword id="KW-0472">Membrane</keyword>
<keyword id="KW-0488">Methylation</keyword>
<keyword id="KW-0547">Nucleotide-binding</keyword>
<keyword id="KW-0636">Prenylation</keyword>
<keyword id="KW-1267">Proteomics identification</keyword>
<keyword id="KW-1185">Reference proteome</keyword>
<gene>
    <name type="primary">RASD2</name>
    <name type="synonym">TEM2</name>
</gene>
<organism>
    <name type="scientific">Homo sapiens</name>
    <name type="common">Human</name>
    <dbReference type="NCBI Taxonomy" id="9606"/>
    <lineage>
        <taxon>Eukaryota</taxon>
        <taxon>Metazoa</taxon>
        <taxon>Chordata</taxon>
        <taxon>Craniata</taxon>
        <taxon>Vertebrata</taxon>
        <taxon>Euteleostomi</taxon>
        <taxon>Mammalia</taxon>
        <taxon>Eutheria</taxon>
        <taxon>Euarchontoglires</taxon>
        <taxon>Primates</taxon>
        <taxon>Haplorrhini</taxon>
        <taxon>Catarrhini</taxon>
        <taxon>Hominidae</taxon>
        <taxon>Homo</taxon>
    </lineage>
</organism>
<evidence type="ECO:0000250" key="1"/>
<evidence type="ECO:0000269" key="2">
    <source>
    </source>
</evidence>
<evidence type="ECO:0000269" key="3">
    <source>
    </source>
</evidence>
<evidence type="ECO:0000269" key="4">
    <source>
    </source>
</evidence>
<evidence type="ECO:0000305" key="5"/>
<name>RHES_HUMAN</name>
<reference key="1">
    <citation type="journal article" date="2000" name="Science">
        <title>Genes expressed in human tumor endothelium.</title>
        <authorList>
            <person name="St Croix B."/>
            <person name="Rago C."/>
            <person name="Velculescu V.E."/>
            <person name="Traverso G."/>
            <person name="Romans K.E."/>
            <person name="Montgomery E."/>
            <person name="Lal A."/>
            <person name="Riggins G.J."/>
            <person name="Lengauer C."/>
            <person name="Vogelstein B."/>
            <person name="Kinzler K.W."/>
        </authorList>
    </citation>
    <scope>NUCLEOTIDE SEQUENCE [MRNA]</scope>
    <source>
        <tissue>Endothelial cell</tissue>
    </source>
</reference>
<reference key="2">
    <citation type="journal article" date="2004" name="Genome Biol.">
        <title>A genome annotation-driven approach to cloning the human ORFeome.</title>
        <authorList>
            <person name="Collins J.E."/>
            <person name="Wright C.L."/>
            <person name="Edwards C.A."/>
            <person name="Davis M.P."/>
            <person name="Grinham J.A."/>
            <person name="Cole C.G."/>
            <person name="Goward M.E."/>
            <person name="Aguado B."/>
            <person name="Mallya M."/>
            <person name="Mokrab Y."/>
            <person name="Huckle E.J."/>
            <person name="Beare D.M."/>
            <person name="Dunham I."/>
        </authorList>
    </citation>
    <scope>NUCLEOTIDE SEQUENCE [LARGE SCALE MRNA]</scope>
</reference>
<reference key="3">
    <citation type="journal article" date="1999" name="Nature">
        <title>The DNA sequence of human chromosome 22.</title>
        <authorList>
            <person name="Dunham I."/>
            <person name="Hunt A.R."/>
            <person name="Collins J.E."/>
            <person name="Bruskiewich R."/>
            <person name="Beare D.M."/>
            <person name="Clamp M."/>
            <person name="Smink L.J."/>
            <person name="Ainscough R."/>
            <person name="Almeida J.P."/>
            <person name="Babbage A.K."/>
            <person name="Bagguley C."/>
            <person name="Bailey J."/>
            <person name="Barlow K.F."/>
            <person name="Bates K.N."/>
            <person name="Beasley O.P."/>
            <person name="Bird C.P."/>
            <person name="Blakey S.E."/>
            <person name="Bridgeman A.M."/>
            <person name="Buck D."/>
            <person name="Burgess J."/>
            <person name="Burrill W.D."/>
            <person name="Burton J."/>
            <person name="Carder C."/>
            <person name="Carter N.P."/>
            <person name="Chen Y."/>
            <person name="Clark G."/>
            <person name="Clegg S.M."/>
            <person name="Cobley V.E."/>
            <person name="Cole C.G."/>
            <person name="Collier R.E."/>
            <person name="Connor R."/>
            <person name="Conroy D."/>
            <person name="Corby N.R."/>
            <person name="Coville G.J."/>
            <person name="Cox A.V."/>
            <person name="Davis J."/>
            <person name="Dawson E."/>
            <person name="Dhami P.D."/>
            <person name="Dockree C."/>
            <person name="Dodsworth S.J."/>
            <person name="Durbin R.M."/>
            <person name="Ellington A.G."/>
            <person name="Evans K.L."/>
            <person name="Fey J.M."/>
            <person name="Fleming K."/>
            <person name="French L."/>
            <person name="Garner A.A."/>
            <person name="Gilbert J.G.R."/>
            <person name="Goward M.E."/>
            <person name="Grafham D.V."/>
            <person name="Griffiths M.N.D."/>
            <person name="Hall C."/>
            <person name="Hall R.E."/>
            <person name="Hall-Tamlyn G."/>
            <person name="Heathcott R.W."/>
            <person name="Ho S."/>
            <person name="Holmes S."/>
            <person name="Hunt S.E."/>
            <person name="Jones M.C."/>
            <person name="Kershaw J."/>
            <person name="Kimberley A.M."/>
            <person name="King A."/>
            <person name="Laird G.K."/>
            <person name="Langford C.F."/>
            <person name="Leversha M.A."/>
            <person name="Lloyd C."/>
            <person name="Lloyd D.M."/>
            <person name="Martyn I.D."/>
            <person name="Mashreghi-Mohammadi M."/>
            <person name="Matthews L.H."/>
            <person name="Mccann O.T."/>
            <person name="Mcclay J."/>
            <person name="Mclaren S."/>
            <person name="McMurray A.A."/>
            <person name="Milne S.A."/>
            <person name="Mortimore B.J."/>
            <person name="Odell C.N."/>
            <person name="Pavitt R."/>
            <person name="Pearce A.V."/>
            <person name="Pearson D."/>
            <person name="Phillimore B.J.C.T."/>
            <person name="Phillips S.H."/>
            <person name="Plumb R.W."/>
            <person name="Ramsay H."/>
            <person name="Ramsey Y."/>
            <person name="Rogers L."/>
            <person name="Ross M.T."/>
            <person name="Scott C.E."/>
            <person name="Sehra H.K."/>
            <person name="Skuce C.D."/>
            <person name="Smalley S."/>
            <person name="Smith M.L."/>
            <person name="Soderlund C."/>
            <person name="Spragon L."/>
            <person name="Steward C.A."/>
            <person name="Sulston J.E."/>
            <person name="Swann R.M."/>
            <person name="Vaudin M."/>
            <person name="Wall M."/>
            <person name="Wallis J.M."/>
            <person name="Whiteley M.N."/>
            <person name="Willey D.L."/>
            <person name="Williams L."/>
            <person name="Williams S.A."/>
            <person name="Williamson H."/>
            <person name="Wilmer T.E."/>
            <person name="Wilming L."/>
            <person name="Wright C.L."/>
            <person name="Hubbard T."/>
            <person name="Bentley D.R."/>
            <person name="Beck S."/>
            <person name="Rogers J."/>
            <person name="Shimizu N."/>
            <person name="Minoshima S."/>
            <person name="Kawasaki K."/>
            <person name="Sasaki T."/>
            <person name="Asakawa S."/>
            <person name="Kudoh J."/>
            <person name="Shintani A."/>
            <person name="Shibuya K."/>
            <person name="Yoshizaki Y."/>
            <person name="Aoki N."/>
            <person name="Mitsuyama S."/>
            <person name="Roe B.A."/>
            <person name="Chen F."/>
            <person name="Chu L."/>
            <person name="Crabtree J."/>
            <person name="Deschamps S."/>
            <person name="Do A."/>
            <person name="Do T."/>
            <person name="Dorman A."/>
            <person name="Fang F."/>
            <person name="Fu Y."/>
            <person name="Hu P."/>
            <person name="Hua A."/>
            <person name="Kenton S."/>
            <person name="Lai H."/>
            <person name="Lao H.I."/>
            <person name="Lewis J."/>
            <person name="Lewis S."/>
            <person name="Lin S.-P."/>
            <person name="Loh P."/>
            <person name="Malaj E."/>
            <person name="Nguyen T."/>
            <person name="Pan H."/>
            <person name="Phan S."/>
            <person name="Qi S."/>
            <person name="Qian Y."/>
            <person name="Ray L."/>
            <person name="Ren Q."/>
            <person name="Shaull S."/>
            <person name="Sloan D."/>
            <person name="Song L."/>
            <person name="Wang Q."/>
            <person name="Wang Y."/>
            <person name="Wang Z."/>
            <person name="White J."/>
            <person name="Willingham D."/>
            <person name="Wu H."/>
            <person name="Yao Z."/>
            <person name="Zhan M."/>
            <person name="Zhang G."/>
            <person name="Chissoe S."/>
            <person name="Murray J."/>
            <person name="Miller N."/>
            <person name="Minx P."/>
            <person name="Fulton R."/>
            <person name="Johnson D."/>
            <person name="Bemis G."/>
            <person name="Bentley D."/>
            <person name="Bradshaw H."/>
            <person name="Bourne S."/>
            <person name="Cordes M."/>
            <person name="Du Z."/>
            <person name="Fulton L."/>
            <person name="Goela D."/>
            <person name="Graves T."/>
            <person name="Hawkins J."/>
            <person name="Hinds K."/>
            <person name="Kemp K."/>
            <person name="Latreille P."/>
            <person name="Layman D."/>
            <person name="Ozersky P."/>
            <person name="Rohlfing T."/>
            <person name="Scheet P."/>
            <person name="Walker C."/>
            <person name="Wamsley A."/>
            <person name="Wohldmann P."/>
            <person name="Pepin K."/>
            <person name="Nelson J."/>
            <person name="Korf I."/>
            <person name="Bedell J.A."/>
            <person name="Hillier L.W."/>
            <person name="Mardis E."/>
            <person name="Waterston R."/>
            <person name="Wilson R."/>
            <person name="Emanuel B.S."/>
            <person name="Shaikh T."/>
            <person name="Kurahashi H."/>
            <person name="Saitta S."/>
            <person name="Budarf M.L."/>
            <person name="McDermid H.E."/>
            <person name="Johnson A."/>
            <person name="Wong A.C.C."/>
            <person name="Morrow B.E."/>
            <person name="Edelmann L."/>
            <person name="Kim U.J."/>
            <person name="Shizuya H."/>
            <person name="Simon M.I."/>
            <person name="Dumanski J.P."/>
            <person name="Peyrard M."/>
            <person name="Kedra D."/>
            <person name="Seroussi E."/>
            <person name="Fransson I."/>
            <person name="Tapia I."/>
            <person name="Bruder C.E."/>
            <person name="O'Brien K.P."/>
            <person name="Wilkinson P."/>
            <person name="Bodenteich A."/>
            <person name="Hartman K."/>
            <person name="Hu X."/>
            <person name="Khan A.S."/>
            <person name="Lane L."/>
            <person name="Tilahun Y."/>
            <person name="Wright H."/>
        </authorList>
    </citation>
    <scope>NUCLEOTIDE SEQUENCE [LARGE SCALE GENOMIC DNA]</scope>
</reference>
<reference key="4">
    <citation type="journal article" date="2004" name="Genome Res.">
        <title>The status, quality, and expansion of the NIH full-length cDNA project: the Mammalian Gene Collection (MGC).</title>
        <authorList>
            <consortium name="The MGC Project Team"/>
        </authorList>
    </citation>
    <scope>NUCLEOTIDE SEQUENCE [LARGE SCALE MRNA]</scope>
    <source>
        <tissue>Uterus</tissue>
    </source>
</reference>
<reference key="5">
    <citation type="journal article" date="2002" name="Br. J. Pharmacol.">
        <title>Identification of the monomeric G-protein, Rhes, as an efaroxan-regulated protein in the pancreatic beta-cell.</title>
        <authorList>
            <person name="Chan S.L.F."/>
            <person name="Monks L.K."/>
            <person name="Gao H."/>
            <person name="Deaville P."/>
            <person name="Morgan N.G."/>
        </authorList>
    </citation>
    <scope>FUNCTION</scope>
    <scope>TISSUE SPECIFICITY</scope>
</reference>
<reference key="6">
    <citation type="journal article" date="2009" name="Cell. Physiol. Biochem.">
        <title>The cationic region of Rhes mediates its interactions with specific Gbeta subunits.</title>
        <authorList>
            <person name="Hill C."/>
            <person name="Goddard A."/>
            <person name="Ladds G."/>
            <person name="Davey J."/>
        </authorList>
    </citation>
    <scope>FUNCTION</scope>
    <scope>INTERACTION WITH GNB1; GNB2 AND GNB3</scope>
</reference>
<reference key="7">
    <citation type="journal article" date="2009" name="Science">
        <title>Rhes, a striatal specific protein, mediates mutant-huntingtin cytotoxicity.</title>
        <authorList>
            <person name="Subramaniam S."/>
            <person name="Sixt K.M."/>
            <person name="Barrow R."/>
            <person name="Snyder S.H."/>
        </authorList>
    </citation>
    <scope>INTERACTION WITH HTT</scope>
    <scope>INVOLVEMENT IN CELL SURVIVAL</scope>
</reference>
<feature type="chain" id="PRO_0000082720" description="GTP-binding protein Rhes">
    <location>
        <begin position="1"/>
        <end position="263"/>
    </location>
</feature>
<feature type="propeptide" id="PRO_0000281375" description="Removed in mature form" evidence="1">
    <location>
        <begin position="264"/>
        <end position="266"/>
    </location>
</feature>
<feature type="region of interest" description="Interaction with GNB1, GNB2 and GNB3" evidence="3">
    <location>
        <begin position="189"/>
        <end position="235"/>
    </location>
</feature>
<feature type="short sequence motif" description="Effector region">
    <location>
        <begin position="48"/>
        <end position="56"/>
    </location>
</feature>
<feature type="binding site" evidence="1">
    <location>
        <begin position="26"/>
        <end position="33"/>
    </location>
    <ligand>
        <name>GTP</name>
        <dbReference type="ChEBI" id="CHEBI:37565"/>
    </ligand>
</feature>
<feature type="binding site" evidence="1">
    <location>
        <begin position="73"/>
        <end position="77"/>
    </location>
    <ligand>
        <name>GTP</name>
        <dbReference type="ChEBI" id="CHEBI:37565"/>
    </ligand>
</feature>
<feature type="binding site" evidence="1">
    <location>
        <begin position="140"/>
        <end position="143"/>
    </location>
    <ligand>
        <name>GTP</name>
        <dbReference type="ChEBI" id="CHEBI:37565"/>
    </ligand>
</feature>
<feature type="modified residue" description="Cysteine methyl ester" evidence="1">
    <location>
        <position position="263"/>
    </location>
</feature>
<feature type="lipid moiety-binding region" description="S-farnesyl cysteine" evidence="1">
    <location>
        <position position="263"/>
    </location>
</feature>
<dbReference type="EMBL" id="AF279143">
    <property type="protein sequence ID" value="AAG00868.1"/>
    <property type="status" value="ALT_INIT"/>
    <property type="molecule type" value="mRNA"/>
</dbReference>
<dbReference type="EMBL" id="CR456477">
    <property type="protein sequence ID" value="CAG30363.1"/>
    <property type="molecule type" value="mRNA"/>
</dbReference>
<dbReference type="EMBL" id="AL022334">
    <property type="status" value="NOT_ANNOTATED_CDS"/>
    <property type="molecule type" value="Genomic_DNA"/>
</dbReference>
<dbReference type="EMBL" id="BC013419">
    <property type="protein sequence ID" value="AAH13419.1"/>
    <property type="molecule type" value="mRNA"/>
</dbReference>
<dbReference type="CCDS" id="CCDS13916.1"/>
<dbReference type="RefSeq" id="NP_001353654.1">
    <property type="nucleotide sequence ID" value="NM_001366725.1"/>
</dbReference>
<dbReference type="RefSeq" id="NP_001363444.1">
    <property type="nucleotide sequence ID" value="NM_001376515.1"/>
</dbReference>
<dbReference type="RefSeq" id="NP_001363445.1">
    <property type="nucleotide sequence ID" value="NM_001376516.1"/>
</dbReference>
<dbReference type="RefSeq" id="NP_055125.2">
    <property type="nucleotide sequence ID" value="NM_014310.3"/>
</dbReference>
<dbReference type="RefSeq" id="XP_005261499.1">
    <property type="nucleotide sequence ID" value="XM_005261442.4"/>
</dbReference>
<dbReference type="RefSeq" id="XP_011528342.1">
    <property type="nucleotide sequence ID" value="XM_011530040.3"/>
</dbReference>
<dbReference type="RefSeq" id="XP_016884190.1">
    <property type="nucleotide sequence ID" value="XM_017028701.1"/>
</dbReference>
<dbReference type="RefSeq" id="XP_016884191.1">
    <property type="nucleotide sequence ID" value="XM_017028702.2"/>
</dbReference>
<dbReference type="RefSeq" id="XP_054181372.1">
    <property type="nucleotide sequence ID" value="XM_054325397.1"/>
</dbReference>
<dbReference type="RefSeq" id="XP_054181373.1">
    <property type="nucleotide sequence ID" value="XM_054325398.1"/>
</dbReference>
<dbReference type="SMR" id="Q96D21"/>
<dbReference type="BioGRID" id="117095">
    <property type="interactions" value="14"/>
</dbReference>
<dbReference type="FunCoup" id="Q96D21">
    <property type="interactions" value="785"/>
</dbReference>
<dbReference type="IntAct" id="Q96D21">
    <property type="interactions" value="5"/>
</dbReference>
<dbReference type="MINT" id="Q96D21"/>
<dbReference type="STRING" id="9606.ENSP00000216127"/>
<dbReference type="iPTMnet" id="Q96D21"/>
<dbReference type="PhosphoSitePlus" id="Q96D21"/>
<dbReference type="BioMuta" id="RASD2"/>
<dbReference type="DMDM" id="21362868"/>
<dbReference type="jPOST" id="Q96D21"/>
<dbReference type="MassIVE" id="Q96D21"/>
<dbReference type="PaxDb" id="9606-ENSP00000216127"/>
<dbReference type="PeptideAtlas" id="Q96D21"/>
<dbReference type="Antibodypedia" id="205">
    <property type="antibodies" value="396 antibodies from 33 providers"/>
</dbReference>
<dbReference type="DNASU" id="23551"/>
<dbReference type="Ensembl" id="ENST00000216127.5">
    <property type="protein sequence ID" value="ENSP00000216127.4"/>
    <property type="gene ID" value="ENSG00000100302.7"/>
</dbReference>
<dbReference type="GeneID" id="23551"/>
<dbReference type="KEGG" id="hsa:23551"/>
<dbReference type="MANE-Select" id="ENST00000216127.5">
    <property type="protein sequence ID" value="ENSP00000216127.4"/>
    <property type="RefSeq nucleotide sequence ID" value="NM_014310.4"/>
    <property type="RefSeq protein sequence ID" value="NP_055125.2"/>
</dbReference>
<dbReference type="UCSC" id="uc003anx.4">
    <property type="organism name" value="human"/>
</dbReference>
<dbReference type="AGR" id="HGNC:18229"/>
<dbReference type="CTD" id="23551"/>
<dbReference type="DisGeNET" id="23551"/>
<dbReference type="GeneCards" id="RASD2"/>
<dbReference type="HGNC" id="HGNC:18229">
    <property type="gene designation" value="RASD2"/>
</dbReference>
<dbReference type="HPA" id="ENSG00000100302">
    <property type="expression patterns" value="Tissue enriched (brain)"/>
</dbReference>
<dbReference type="MIM" id="612842">
    <property type="type" value="gene"/>
</dbReference>
<dbReference type="neXtProt" id="NX_Q96D21"/>
<dbReference type="OpenTargets" id="ENSG00000100302"/>
<dbReference type="PharmGKB" id="PA34237"/>
<dbReference type="VEuPathDB" id="HostDB:ENSG00000100302"/>
<dbReference type="eggNOG" id="KOG0395">
    <property type="taxonomic scope" value="Eukaryota"/>
</dbReference>
<dbReference type="GeneTree" id="ENSGT00940000161129"/>
<dbReference type="HOGENOM" id="CLU_041217_9_3_1"/>
<dbReference type="InParanoid" id="Q96D21"/>
<dbReference type="OMA" id="CLKNRTK"/>
<dbReference type="OrthoDB" id="265044at2759"/>
<dbReference type="PAN-GO" id="Q96D21">
    <property type="GO annotations" value="2 GO annotations based on evolutionary models"/>
</dbReference>
<dbReference type="PhylomeDB" id="Q96D21"/>
<dbReference type="TreeFam" id="TF316238"/>
<dbReference type="PathwayCommons" id="Q96D21"/>
<dbReference type="SignaLink" id="Q96D21"/>
<dbReference type="BioGRID-ORCS" id="23551">
    <property type="hits" value="19 hits in 1143 CRISPR screens"/>
</dbReference>
<dbReference type="GeneWiki" id="RASD2"/>
<dbReference type="GenomeRNAi" id="23551"/>
<dbReference type="Pharos" id="Q96D21">
    <property type="development level" value="Tbio"/>
</dbReference>
<dbReference type="PRO" id="PR:Q96D21"/>
<dbReference type="Proteomes" id="UP000005640">
    <property type="component" value="Chromosome 22"/>
</dbReference>
<dbReference type="RNAct" id="Q96D21">
    <property type="molecule type" value="protein"/>
</dbReference>
<dbReference type="Bgee" id="ENSG00000100302">
    <property type="expression patterns" value="Expressed in putamen and 106 other cell types or tissues"/>
</dbReference>
<dbReference type="GO" id="GO:0005886">
    <property type="term" value="C:plasma membrane"/>
    <property type="evidence" value="ECO:0000250"/>
    <property type="project" value="UniProtKB"/>
</dbReference>
<dbReference type="GO" id="GO:0045202">
    <property type="term" value="C:synapse"/>
    <property type="evidence" value="ECO:0007669"/>
    <property type="project" value="GOC"/>
</dbReference>
<dbReference type="GO" id="GO:0031681">
    <property type="term" value="F:G-protein beta-subunit binding"/>
    <property type="evidence" value="ECO:0000353"/>
    <property type="project" value="UniProtKB"/>
</dbReference>
<dbReference type="GO" id="GO:0005525">
    <property type="term" value="F:GTP binding"/>
    <property type="evidence" value="ECO:0007669"/>
    <property type="project" value="UniProtKB-KW"/>
</dbReference>
<dbReference type="GO" id="GO:0003924">
    <property type="term" value="F:GTPase activity"/>
    <property type="evidence" value="ECO:0000303"/>
    <property type="project" value="UniProtKB"/>
</dbReference>
<dbReference type="GO" id="GO:0007626">
    <property type="term" value="P:locomotory behavior"/>
    <property type="evidence" value="ECO:0000250"/>
    <property type="project" value="UniProtKB"/>
</dbReference>
<dbReference type="GO" id="GO:0051897">
    <property type="term" value="P:positive regulation of phosphatidylinositol 3-kinase/protein kinase B signal transduction"/>
    <property type="evidence" value="ECO:0000250"/>
    <property type="project" value="UniProtKB"/>
</dbReference>
<dbReference type="GO" id="GO:0033235">
    <property type="term" value="P:positive regulation of protein sumoylation"/>
    <property type="evidence" value="ECO:0000250"/>
    <property type="project" value="UniProtKB"/>
</dbReference>
<dbReference type="GO" id="GO:0007165">
    <property type="term" value="P:signal transduction"/>
    <property type="evidence" value="ECO:0000318"/>
    <property type="project" value="GO_Central"/>
</dbReference>
<dbReference type="GO" id="GO:0001963">
    <property type="term" value="P:synaptic transmission, dopaminergic"/>
    <property type="evidence" value="ECO:0007669"/>
    <property type="project" value="Ensembl"/>
</dbReference>
<dbReference type="CDD" id="cd04143">
    <property type="entry name" value="Rhes_like"/>
    <property type="match status" value="1"/>
</dbReference>
<dbReference type="FunFam" id="3.40.50.300:FF:000475">
    <property type="entry name" value="GTP-binding protein Rhes"/>
    <property type="match status" value="1"/>
</dbReference>
<dbReference type="Gene3D" id="3.40.50.300">
    <property type="entry name" value="P-loop containing nucleotide triphosphate hydrolases"/>
    <property type="match status" value="1"/>
</dbReference>
<dbReference type="InterPro" id="IPR027417">
    <property type="entry name" value="P-loop_NTPase"/>
</dbReference>
<dbReference type="InterPro" id="IPR005225">
    <property type="entry name" value="Small_GTP-bd"/>
</dbReference>
<dbReference type="InterPro" id="IPR001806">
    <property type="entry name" value="Small_GTPase"/>
</dbReference>
<dbReference type="InterPro" id="IPR052236">
    <property type="entry name" value="Small_GTPase_RasD"/>
</dbReference>
<dbReference type="NCBIfam" id="TIGR00231">
    <property type="entry name" value="small_GTP"/>
    <property type="match status" value="1"/>
</dbReference>
<dbReference type="PANTHER" id="PTHR46149:SF1">
    <property type="entry name" value="GTP-BINDING PROTEIN RHES"/>
    <property type="match status" value="1"/>
</dbReference>
<dbReference type="PANTHER" id="PTHR46149">
    <property type="entry name" value="MIP08469P"/>
    <property type="match status" value="1"/>
</dbReference>
<dbReference type="Pfam" id="PF00071">
    <property type="entry name" value="Ras"/>
    <property type="match status" value="1"/>
</dbReference>
<dbReference type="PRINTS" id="PR00449">
    <property type="entry name" value="RASTRNSFRMNG"/>
</dbReference>
<dbReference type="SMART" id="SM00175">
    <property type="entry name" value="RAB"/>
    <property type="match status" value="1"/>
</dbReference>
<dbReference type="SMART" id="SM00176">
    <property type="entry name" value="RAN"/>
    <property type="match status" value="1"/>
</dbReference>
<dbReference type="SMART" id="SM00173">
    <property type="entry name" value="RAS"/>
    <property type="match status" value="1"/>
</dbReference>
<dbReference type="SMART" id="SM00174">
    <property type="entry name" value="RHO"/>
    <property type="match status" value="1"/>
</dbReference>
<dbReference type="SUPFAM" id="SSF52540">
    <property type="entry name" value="P-loop containing nucleoside triphosphate hydrolases"/>
    <property type="match status" value="1"/>
</dbReference>
<dbReference type="PROSITE" id="PS51421">
    <property type="entry name" value="RAS"/>
    <property type="match status" value="1"/>
</dbReference>
<sequence>MMKTLSSGNCTLSVPAKNSYRMVVLGASRVGKSSIVSRFLNGRFEDQYTPTIEDFHRKVYNIRGDMYQLDILDTSGNHPFPAMRRLSILTGDVFILVFSLDNRESFDEVKRLQKQILEVKSCLKNKTKEAAELPMVICGNKNDHGELCRQVPTTEAELLVSGDENCAYFEVSAKKNTNVDEMFYVLFSMAKLPHEMSPALHRKISVQYGDAFHPRPFCMRRVKEMDAYGMVSPFARRPSVNSDLKYIKAKVLREGQARERDKCTIQ</sequence>
<comment type="function">
    <text evidence="2 3">GTPase signaling protein that binds to and hydrolyzes GTP. Regulates signaling pathways involving G-proteins-coupled receptor and heterotrimeric proteins such as GNB1, GNB2 and GNB3. May be involved in selected striatal competencies, mainly locomotor activity and motor coordination.</text>
</comment>
<comment type="subunit">
    <text evidence="1 3 4 5">Monomer (Potential). Interacts with PIK3CA and UBE2I (By similarity). Interacts with GNB1, GNB2 and GNB3. Interacts with HTT; interacts with mutant HTT (mHTT) with a much higher affinity than wild type HTT.</text>
</comment>
<comment type="subcellular location">
    <subcellularLocation>
        <location evidence="1">Cell membrane</location>
        <topology evidence="1">Lipid-anchor</topology>
    </subcellularLocation>
</comment>
<comment type="tissue specificity">
    <text evidence="2">Pancreatic endocrine cells (islets of Langerhans).</text>
</comment>
<comment type="PTM">
    <text evidence="1">Farnesylated. Farnesylation is required for membrane targeting (By similarity).</text>
</comment>
<comment type="miscellaneous">
    <text>Reduces cell survival in striatal cells with Huntington disease by binding to mutant Huntington disease protein (mHTT; poly-Gln region with 82 repeats) and inducing sumoylation of mHTT.</text>
</comment>
<comment type="similarity">
    <text evidence="5">Belongs to the small GTPase superfamily. RasD family.</text>
</comment>
<comment type="sequence caution" evidence="5">
    <conflict type="erroneous initiation">
        <sequence resource="EMBL-CDS" id="AAG00868"/>
    </conflict>
    <text>Extended N-terminus.</text>
</comment>